<name>RL19_LACLA</name>
<proteinExistence type="inferred from homology"/>
<keyword id="KW-1185">Reference proteome</keyword>
<keyword id="KW-0687">Ribonucleoprotein</keyword>
<keyword id="KW-0689">Ribosomal protein</keyword>
<sequence length="114" mass="13119">MNLIESINAAQLRTDIPDFRPGDTVRVHAKVVEGTRERIQMFEGVVIARKNSGINETYTVRKISNGVGVERIFPVHTPRVEQIEVIRHGKVRRAKLYYLRALTGKKARIAERRR</sequence>
<feature type="chain" id="PRO_0000163469" description="Large ribosomal subunit protein bL19">
    <location>
        <begin position="1"/>
        <end position="114"/>
    </location>
</feature>
<evidence type="ECO:0000255" key="1">
    <source>
        <dbReference type="HAMAP-Rule" id="MF_00402"/>
    </source>
</evidence>
<evidence type="ECO:0000305" key="2"/>
<dbReference type="EMBL" id="AE005176">
    <property type="protein sequence ID" value="AAK04972.1"/>
    <property type="status" value="ALT_INIT"/>
    <property type="molecule type" value="Genomic_DNA"/>
</dbReference>
<dbReference type="PIR" id="B86734">
    <property type="entry name" value="B86734"/>
</dbReference>
<dbReference type="RefSeq" id="NP_267030.1">
    <property type="nucleotide sequence ID" value="NC_002662.1"/>
</dbReference>
<dbReference type="RefSeq" id="WP_012897519.1">
    <property type="nucleotide sequence ID" value="NC_002662.1"/>
</dbReference>
<dbReference type="SMR" id="Q9CH65"/>
<dbReference type="PaxDb" id="272623-L0415"/>
<dbReference type="EnsemblBacteria" id="AAK04972">
    <property type="protein sequence ID" value="AAK04972"/>
    <property type="gene ID" value="L0415"/>
</dbReference>
<dbReference type="GeneID" id="89633016"/>
<dbReference type="KEGG" id="lla:L0415"/>
<dbReference type="PATRIC" id="fig|272623.7.peg.935"/>
<dbReference type="eggNOG" id="COG0335">
    <property type="taxonomic scope" value="Bacteria"/>
</dbReference>
<dbReference type="HOGENOM" id="CLU_103507_2_1_9"/>
<dbReference type="OrthoDB" id="9803541at2"/>
<dbReference type="Proteomes" id="UP000002196">
    <property type="component" value="Chromosome"/>
</dbReference>
<dbReference type="GO" id="GO:0022625">
    <property type="term" value="C:cytosolic large ribosomal subunit"/>
    <property type="evidence" value="ECO:0007669"/>
    <property type="project" value="TreeGrafter"/>
</dbReference>
<dbReference type="GO" id="GO:0003735">
    <property type="term" value="F:structural constituent of ribosome"/>
    <property type="evidence" value="ECO:0007669"/>
    <property type="project" value="InterPro"/>
</dbReference>
<dbReference type="GO" id="GO:0006412">
    <property type="term" value="P:translation"/>
    <property type="evidence" value="ECO:0007669"/>
    <property type="project" value="UniProtKB-UniRule"/>
</dbReference>
<dbReference type="FunFam" id="2.30.30.790:FF:000001">
    <property type="entry name" value="50S ribosomal protein L19"/>
    <property type="match status" value="1"/>
</dbReference>
<dbReference type="Gene3D" id="2.30.30.790">
    <property type="match status" value="1"/>
</dbReference>
<dbReference type="HAMAP" id="MF_00402">
    <property type="entry name" value="Ribosomal_bL19"/>
    <property type="match status" value="1"/>
</dbReference>
<dbReference type="InterPro" id="IPR001857">
    <property type="entry name" value="Ribosomal_bL19"/>
</dbReference>
<dbReference type="InterPro" id="IPR018257">
    <property type="entry name" value="Ribosomal_bL19_CS"/>
</dbReference>
<dbReference type="InterPro" id="IPR038657">
    <property type="entry name" value="Ribosomal_bL19_sf"/>
</dbReference>
<dbReference type="InterPro" id="IPR008991">
    <property type="entry name" value="Translation_prot_SH3-like_sf"/>
</dbReference>
<dbReference type="NCBIfam" id="TIGR01024">
    <property type="entry name" value="rplS_bact"/>
    <property type="match status" value="1"/>
</dbReference>
<dbReference type="PANTHER" id="PTHR15680:SF9">
    <property type="entry name" value="LARGE RIBOSOMAL SUBUNIT PROTEIN BL19M"/>
    <property type="match status" value="1"/>
</dbReference>
<dbReference type="PANTHER" id="PTHR15680">
    <property type="entry name" value="RIBOSOMAL PROTEIN L19"/>
    <property type="match status" value="1"/>
</dbReference>
<dbReference type="Pfam" id="PF01245">
    <property type="entry name" value="Ribosomal_L19"/>
    <property type="match status" value="1"/>
</dbReference>
<dbReference type="PIRSF" id="PIRSF002191">
    <property type="entry name" value="Ribosomal_L19"/>
    <property type="match status" value="1"/>
</dbReference>
<dbReference type="PRINTS" id="PR00061">
    <property type="entry name" value="RIBOSOMALL19"/>
</dbReference>
<dbReference type="SUPFAM" id="SSF50104">
    <property type="entry name" value="Translation proteins SH3-like domain"/>
    <property type="match status" value="1"/>
</dbReference>
<dbReference type="PROSITE" id="PS01015">
    <property type="entry name" value="RIBOSOMAL_L19"/>
    <property type="match status" value="1"/>
</dbReference>
<protein>
    <recommendedName>
        <fullName evidence="1">Large ribosomal subunit protein bL19</fullName>
    </recommendedName>
    <alternativeName>
        <fullName evidence="2">50S ribosomal protein L19</fullName>
    </alternativeName>
</protein>
<gene>
    <name evidence="1" type="primary">rplS</name>
    <name type="ordered locus">LL0874</name>
    <name type="ORF">L0415</name>
</gene>
<comment type="function">
    <text evidence="1">This protein is located at the 30S-50S ribosomal subunit interface and may play a role in the structure and function of the aminoacyl-tRNA binding site.</text>
</comment>
<comment type="similarity">
    <text evidence="1">Belongs to the bacterial ribosomal protein bL19 family.</text>
</comment>
<comment type="sequence caution" evidence="2">
    <conflict type="erroneous initiation">
        <sequence resource="EMBL-CDS" id="AAK04972"/>
    </conflict>
</comment>
<accession>Q9CH65</accession>
<reference key="1">
    <citation type="journal article" date="2001" name="Genome Res.">
        <title>The complete genome sequence of the lactic acid bacterium Lactococcus lactis ssp. lactis IL1403.</title>
        <authorList>
            <person name="Bolotin A."/>
            <person name="Wincker P."/>
            <person name="Mauger S."/>
            <person name="Jaillon O."/>
            <person name="Malarme K."/>
            <person name="Weissenbach J."/>
            <person name="Ehrlich S.D."/>
            <person name="Sorokin A."/>
        </authorList>
    </citation>
    <scope>NUCLEOTIDE SEQUENCE [LARGE SCALE GENOMIC DNA]</scope>
    <source>
        <strain>IL1403</strain>
    </source>
</reference>
<organism>
    <name type="scientific">Lactococcus lactis subsp. lactis (strain IL1403)</name>
    <name type="common">Streptococcus lactis</name>
    <dbReference type="NCBI Taxonomy" id="272623"/>
    <lineage>
        <taxon>Bacteria</taxon>
        <taxon>Bacillati</taxon>
        <taxon>Bacillota</taxon>
        <taxon>Bacilli</taxon>
        <taxon>Lactobacillales</taxon>
        <taxon>Streptococcaceae</taxon>
        <taxon>Lactococcus</taxon>
    </lineage>
</organism>